<organism>
    <name type="scientific">Macaca mulatta</name>
    <name type="common">Rhesus macaque</name>
    <dbReference type="NCBI Taxonomy" id="9544"/>
    <lineage>
        <taxon>Eukaryota</taxon>
        <taxon>Metazoa</taxon>
        <taxon>Chordata</taxon>
        <taxon>Craniata</taxon>
        <taxon>Vertebrata</taxon>
        <taxon>Euteleostomi</taxon>
        <taxon>Mammalia</taxon>
        <taxon>Eutheria</taxon>
        <taxon>Euarchontoglires</taxon>
        <taxon>Primates</taxon>
        <taxon>Haplorrhini</taxon>
        <taxon>Catarrhini</taxon>
        <taxon>Cercopithecidae</taxon>
        <taxon>Cercopithecinae</taxon>
        <taxon>Macaca</taxon>
    </lineage>
</organism>
<accession>Q7YRH3</accession>
<evidence type="ECO:0000250" key="1"/>
<evidence type="ECO:0000255" key="2"/>
<evidence type="ECO:0000305" key="3"/>
<comment type="function">
    <text evidence="1">Does not exhibit any ribonuclease activity.</text>
</comment>
<comment type="subcellular location">
    <subcellularLocation>
        <location evidence="3">Secreted</location>
    </subcellularLocation>
</comment>
<comment type="similarity">
    <text evidence="3">Belongs to the pancreatic ribonuclease family.</text>
</comment>
<gene>
    <name type="primary">RNASE9</name>
</gene>
<proteinExistence type="inferred from homology"/>
<protein>
    <recommendedName>
        <fullName>Inactive ribonuclease-like protein 9</fullName>
    </recommendedName>
</protein>
<reference key="1">
    <citation type="submission" date="2003-06" db="EMBL/GenBank/DDBJ databases">
        <title>LOC122650 on chromosome 14q11.2 is related to the RNase A superfamily and contains a unique amino-terminal pre-protein-like domain.</title>
        <authorList>
            <person name="Devor E.J."/>
            <person name="Moffat-Wilson K.A."/>
        </authorList>
    </citation>
    <scope>NUCLEOTIDE SEQUENCE [GENOMIC DNA]</scope>
</reference>
<name>RNAS9_MACMU</name>
<sequence length="204" mass="24532">MMRTLITTHPLLLLLLLQQLLQPVQFQEVDTDFDSPEDKMEEFREYLEEFRRTGPTRPPTKEKVERRVIIEPGMPLYHRDYCNEEIMRKNVYHKQRCVTEHYFLLMQYDELEKICYNRFVPCKNGVRKCNRSKGLVEGVYCNLTEAFKIPRCKYKSFYRRGYVLITCAWQNEIHKLIPHTINDLVEPPKHRSFLNEDGVFVILP</sequence>
<keyword id="KW-1015">Disulfide bond</keyword>
<keyword id="KW-0325">Glycoprotein</keyword>
<keyword id="KW-1185">Reference proteome</keyword>
<keyword id="KW-0964">Secreted</keyword>
<keyword id="KW-0732">Signal</keyword>
<dbReference type="EMBL" id="AY330193">
    <property type="protein sequence ID" value="AAQ01503.1"/>
    <property type="molecule type" value="Genomic_DNA"/>
</dbReference>
<dbReference type="SMR" id="Q7YRH3"/>
<dbReference type="FunCoup" id="Q7YRH3">
    <property type="interactions" value="8"/>
</dbReference>
<dbReference type="GlyCosmos" id="Q7YRH3">
    <property type="glycosylation" value="2 sites, No reported glycans"/>
</dbReference>
<dbReference type="PaxDb" id="9544-ENSMMUP00000033164"/>
<dbReference type="Ensembl" id="ENSMMUT00000089247.1">
    <property type="protein sequence ID" value="ENSMMUP00000061384.1"/>
    <property type="gene ID" value="ENSMMUG00000055030.1"/>
</dbReference>
<dbReference type="VEuPathDB" id="HostDB:ENSMMUG00000055030"/>
<dbReference type="eggNOG" id="ENOG502TDU6">
    <property type="taxonomic scope" value="Eukaryota"/>
</dbReference>
<dbReference type="GeneTree" id="ENSGT00390000013952"/>
<dbReference type="InParanoid" id="Q7YRH3"/>
<dbReference type="Proteomes" id="UP000006718">
    <property type="component" value="Unassembled WGS sequence"/>
</dbReference>
<dbReference type="GO" id="GO:0005576">
    <property type="term" value="C:extracellular region"/>
    <property type="evidence" value="ECO:0007669"/>
    <property type="project" value="UniProtKB-SubCell"/>
</dbReference>
<dbReference type="GO" id="GO:0003676">
    <property type="term" value="F:nucleic acid binding"/>
    <property type="evidence" value="ECO:0007669"/>
    <property type="project" value="InterPro"/>
</dbReference>
<dbReference type="GO" id="GO:0050830">
    <property type="term" value="P:defense response to Gram-positive bacterium"/>
    <property type="evidence" value="ECO:0000318"/>
    <property type="project" value="GO_Central"/>
</dbReference>
<dbReference type="CDD" id="cd00163">
    <property type="entry name" value="RNase_A"/>
    <property type="match status" value="1"/>
</dbReference>
<dbReference type="FunFam" id="3.10.130.10:FF:000003">
    <property type="entry name" value="Inactive ribonuclease-like protein 9"/>
    <property type="match status" value="1"/>
</dbReference>
<dbReference type="Gene3D" id="3.10.130.10">
    <property type="entry name" value="Ribonuclease A-like domain"/>
    <property type="match status" value="1"/>
</dbReference>
<dbReference type="InterPro" id="IPR001427">
    <property type="entry name" value="RNaseA"/>
</dbReference>
<dbReference type="InterPro" id="IPR036816">
    <property type="entry name" value="RNaseA-like_dom_sf"/>
</dbReference>
<dbReference type="InterPro" id="IPR023412">
    <property type="entry name" value="RNaseA_domain"/>
</dbReference>
<dbReference type="PANTHER" id="PTHR11437:SF14">
    <property type="entry name" value="INACTIVE RIBONUCLEASE-LIKE PROTEIN 9"/>
    <property type="match status" value="1"/>
</dbReference>
<dbReference type="PANTHER" id="PTHR11437">
    <property type="entry name" value="RIBONUCLEASE"/>
    <property type="match status" value="1"/>
</dbReference>
<dbReference type="Pfam" id="PF00074">
    <property type="entry name" value="RnaseA"/>
    <property type="match status" value="1"/>
</dbReference>
<dbReference type="SMART" id="SM00092">
    <property type="entry name" value="RNAse_Pc"/>
    <property type="match status" value="1"/>
</dbReference>
<dbReference type="SUPFAM" id="SSF54076">
    <property type="entry name" value="RNase A-like"/>
    <property type="match status" value="1"/>
</dbReference>
<feature type="signal peptide" evidence="2">
    <location>
        <begin position="1"/>
        <end position="26"/>
    </location>
</feature>
<feature type="chain" id="PRO_0000030954" description="Inactive ribonuclease-like protein 9">
    <location>
        <begin position="27"/>
        <end position="204"/>
    </location>
</feature>
<feature type="glycosylation site" description="N-linked (GlcNAc...) asparagine" evidence="2">
    <location>
        <position position="130"/>
    </location>
</feature>
<feature type="glycosylation site" description="N-linked (GlcNAc...) asparagine" evidence="2">
    <location>
        <position position="142"/>
    </location>
</feature>
<feature type="disulfide bond" evidence="1">
    <location>
        <begin position="97"/>
        <end position="152"/>
    </location>
</feature>
<feature type="disulfide bond" evidence="1">
    <location>
        <begin position="115"/>
        <end position="167"/>
    </location>
</feature>
<feature type="disulfide bond" evidence="1">
    <location>
        <begin position="122"/>
        <end position="129"/>
    </location>
</feature>